<protein>
    <recommendedName>
        <fullName>Alpha-1B adrenergic receptor</fullName>
    </recommendedName>
    <alternativeName>
        <fullName>Alpha-1B adrenoreceptor</fullName>
        <shortName>Alpha-1B adrenoceptor</shortName>
    </alternativeName>
</protein>
<keyword id="KW-1003">Cell membrane</keyword>
<keyword id="KW-0963">Cytoplasm</keyword>
<keyword id="KW-1015">Disulfide bond</keyword>
<keyword id="KW-0297">G-protein coupled receptor</keyword>
<keyword id="KW-0325">Glycoprotein</keyword>
<keyword id="KW-0449">Lipoprotein</keyword>
<keyword id="KW-0472">Membrane</keyword>
<keyword id="KW-0539">Nucleus</keyword>
<keyword id="KW-0564">Palmitate</keyword>
<keyword id="KW-0597">Phosphoprotein</keyword>
<keyword id="KW-0675">Receptor</keyword>
<keyword id="KW-1185">Reference proteome</keyword>
<keyword id="KW-0807">Transducer</keyword>
<keyword id="KW-0812">Transmembrane</keyword>
<keyword id="KW-1133">Transmembrane helix</keyword>
<organism>
    <name type="scientific">Mus musculus</name>
    <name type="common">Mouse</name>
    <dbReference type="NCBI Taxonomy" id="10090"/>
    <lineage>
        <taxon>Eukaryota</taxon>
        <taxon>Metazoa</taxon>
        <taxon>Chordata</taxon>
        <taxon>Craniata</taxon>
        <taxon>Vertebrata</taxon>
        <taxon>Euteleostomi</taxon>
        <taxon>Mammalia</taxon>
        <taxon>Eutheria</taxon>
        <taxon>Euarchontoglires</taxon>
        <taxon>Glires</taxon>
        <taxon>Rodentia</taxon>
        <taxon>Myomorpha</taxon>
        <taxon>Muroidea</taxon>
        <taxon>Muridae</taxon>
        <taxon>Murinae</taxon>
        <taxon>Mus</taxon>
        <taxon>Mus</taxon>
    </lineage>
</organism>
<comment type="function">
    <text evidence="1">This alpha-adrenergic receptor mediates its action by association with G proteins that activate a phosphatidylinositol-calcium second messenger system. Its effect is mediated by G(q) and G(11) proteins. Nuclear ADRA1A-ADRA1B heterooligomers regulate phenylephrine (PE)-stimulated ERK signaling in cardiac myocytes (By similarity).</text>
</comment>
<comment type="subunit">
    <text evidence="2">Homo- and heterooligomer. Heterooligomerizes with ADRA1B homooligomers in cardiac myocytes. Interacts with CAVIN4.</text>
</comment>
<comment type="subcellular location">
    <subcellularLocation>
        <location evidence="6">Nucleus membrane</location>
        <topology evidence="6">Multi-pass membrane protein</topology>
    </subcellularLocation>
    <subcellularLocation>
        <location evidence="1">Cell membrane</location>
        <topology evidence="1">Multi-pass membrane protein</topology>
    </subcellularLocation>
    <subcellularLocation>
        <location evidence="2">Cytoplasm</location>
    </subcellularLocation>
    <subcellularLocation>
        <location evidence="2">Membrane</location>
        <location evidence="2">Caveola</location>
    </subcellularLocation>
    <text evidence="1">Location at the nuclear membrane facilitates heterooligomerization and regulates ERK-mediated signaling in cardiac myocytes. Colocalizes with GNAQ, PLCB1 as well as LAP2 at the nuclear membrane of cardiac myocytes (By similarity).</text>
</comment>
<comment type="similarity">
    <text evidence="4">Belongs to the G-protein coupled receptor 1 family. Adrenergic receptor subfamily. ADRA1B sub-subfamily.</text>
</comment>
<dbReference type="EMBL" id="Y12738">
    <property type="protein sequence ID" value="CAA73272.1"/>
    <property type="molecule type" value="mRNA"/>
</dbReference>
<dbReference type="EMBL" id="S80219">
    <property type="protein sequence ID" value="AAB47043.1"/>
    <property type="molecule type" value="mRNA"/>
</dbReference>
<dbReference type="SMR" id="P97717"/>
<dbReference type="CORUM" id="P97717"/>
<dbReference type="FunCoup" id="P97717">
    <property type="interactions" value="497"/>
</dbReference>
<dbReference type="IntAct" id="P97717">
    <property type="interactions" value="1"/>
</dbReference>
<dbReference type="STRING" id="10090.ENSMUSP00000070200"/>
<dbReference type="BindingDB" id="P97717"/>
<dbReference type="ChEMBL" id="CHEMBL2486"/>
<dbReference type="GlyCosmos" id="P97717">
    <property type="glycosylation" value="4 sites, No reported glycans"/>
</dbReference>
<dbReference type="GlyGen" id="P97717">
    <property type="glycosylation" value="4 sites"/>
</dbReference>
<dbReference type="iPTMnet" id="P97717"/>
<dbReference type="PhosphoSitePlus" id="P97717"/>
<dbReference type="PaxDb" id="10090-ENSMUSP00000070200"/>
<dbReference type="ProteomicsDB" id="285858"/>
<dbReference type="AGR" id="MGI:104774"/>
<dbReference type="MGI" id="MGI:104774">
    <property type="gene designation" value="Adra1b"/>
</dbReference>
<dbReference type="eggNOG" id="KOG3656">
    <property type="taxonomic scope" value="Eukaryota"/>
</dbReference>
<dbReference type="InParanoid" id="P97717"/>
<dbReference type="Reactome" id="R-MMU-390696">
    <property type="pathway name" value="Adrenoceptors"/>
</dbReference>
<dbReference type="Reactome" id="R-MMU-416476">
    <property type="pathway name" value="G alpha (q) signalling events"/>
</dbReference>
<dbReference type="Reactome" id="R-MMU-416482">
    <property type="pathway name" value="G alpha (12/13) signalling events"/>
</dbReference>
<dbReference type="ChiTaRS" id="Adra1b">
    <property type="organism name" value="mouse"/>
</dbReference>
<dbReference type="PRO" id="PR:P97717"/>
<dbReference type="Proteomes" id="UP000000589">
    <property type="component" value="Unplaced"/>
</dbReference>
<dbReference type="RNAct" id="P97717">
    <property type="molecule type" value="protein"/>
</dbReference>
<dbReference type="GO" id="GO:0005901">
    <property type="term" value="C:caveola"/>
    <property type="evidence" value="ECO:0007669"/>
    <property type="project" value="UniProtKB-SubCell"/>
</dbReference>
<dbReference type="GO" id="GO:0005737">
    <property type="term" value="C:cytoplasm"/>
    <property type="evidence" value="ECO:0000250"/>
    <property type="project" value="UniProtKB"/>
</dbReference>
<dbReference type="GO" id="GO:0016020">
    <property type="term" value="C:membrane"/>
    <property type="evidence" value="ECO:0000314"/>
    <property type="project" value="MGI"/>
</dbReference>
<dbReference type="GO" id="GO:0031965">
    <property type="term" value="C:nuclear membrane"/>
    <property type="evidence" value="ECO:0000250"/>
    <property type="project" value="UniProtKB"/>
</dbReference>
<dbReference type="GO" id="GO:0005634">
    <property type="term" value="C:nucleus"/>
    <property type="evidence" value="ECO:0000250"/>
    <property type="project" value="UniProtKB"/>
</dbReference>
<dbReference type="GO" id="GO:0005886">
    <property type="term" value="C:plasma membrane"/>
    <property type="evidence" value="ECO:0000250"/>
    <property type="project" value="UniProtKB"/>
</dbReference>
<dbReference type="GO" id="GO:0004937">
    <property type="term" value="F:alpha1-adrenergic receptor activity"/>
    <property type="evidence" value="ECO:0000314"/>
    <property type="project" value="MGI"/>
</dbReference>
<dbReference type="GO" id="GO:0046982">
    <property type="term" value="F:protein heterodimerization activity"/>
    <property type="evidence" value="ECO:0000250"/>
    <property type="project" value="UniProtKB"/>
</dbReference>
<dbReference type="GO" id="GO:0007512">
    <property type="term" value="P:adult heart development"/>
    <property type="evidence" value="ECO:0000316"/>
    <property type="project" value="MGI"/>
</dbReference>
<dbReference type="GO" id="GO:0048148">
    <property type="term" value="P:behavioral response to cocaine"/>
    <property type="evidence" value="ECO:0000315"/>
    <property type="project" value="MGI"/>
</dbReference>
<dbReference type="GO" id="GO:0001974">
    <property type="term" value="P:blood vessel remodeling"/>
    <property type="evidence" value="ECO:0000315"/>
    <property type="project" value="MGI"/>
</dbReference>
<dbReference type="GO" id="GO:0061049">
    <property type="term" value="P:cell growth involved in cardiac muscle cell development"/>
    <property type="evidence" value="ECO:0000316"/>
    <property type="project" value="MGI"/>
</dbReference>
<dbReference type="GO" id="GO:0042593">
    <property type="term" value="P:glucose homeostasis"/>
    <property type="evidence" value="ECO:0000315"/>
    <property type="project" value="MGI"/>
</dbReference>
<dbReference type="GO" id="GO:0005980">
    <property type="term" value="P:glycogen catabolic process"/>
    <property type="evidence" value="ECO:0000315"/>
    <property type="project" value="MGI"/>
</dbReference>
<dbReference type="GO" id="GO:0007626">
    <property type="term" value="P:locomotory behavior"/>
    <property type="evidence" value="ECO:0000315"/>
    <property type="project" value="MGI"/>
</dbReference>
<dbReference type="GO" id="GO:0045818">
    <property type="term" value="P:negative regulation of glycogen catabolic process"/>
    <property type="evidence" value="ECO:0000315"/>
    <property type="project" value="MGI"/>
</dbReference>
<dbReference type="GO" id="GO:0035024">
    <property type="term" value="P:negative regulation of Rho protein signal transduction"/>
    <property type="evidence" value="ECO:0000266"/>
    <property type="project" value="MGI"/>
</dbReference>
<dbReference type="GO" id="GO:0150099">
    <property type="term" value="P:neuron-glial cell signaling"/>
    <property type="evidence" value="ECO:0000316"/>
    <property type="project" value="ARUK-UCL"/>
</dbReference>
<dbReference type="GO" id="GO:0035265">
    <property type="term" value="P:organ growth"/>
    <property type="evidence" value="ECO:0000316"/>
    <property type="project" value="MGI"/>
</dbReference>
<dbReference type="GO" id="GO:0045819">
    <property type="term" value="P:positive regulation of glycogen catabolic process"/>
    <property type="evidence" value="ECO:0000315"/>
    <property type="project" value="MGI"/>
</dbReference>
<dbReference type="GO" id="GO:0001996">
    <property type="term" value="P:positive regulation of heart rate by epinephrine-norepinephrine"/>
    <property type="evidence" value="ECO:0000316"/>
    <property type="project" value="MGI"/>
</dbReference>
<dbReference type="GO" id="GO:0043410">
    <property type="term" value="P:positive regulation of MAPK cascade"/>
    <property type="evidence" value="ECO:0000250"/>
    <property type="project" value="UniProtKB"/>
</dbReference>
<dbReference type="GO" id="GO:0001997">
    <property type="term" value="P:positive regulation of the force of heart contraction by epinephrine-norepinephrine"/>
    <property type="evidence" value="ECO:0000316"/>
    <property type="project" value="MGI"/>
</dbReference>
<dbReference type="GO" id="GO:0008217">
    <property type="term" value="P:regulation of blood pressure"/>
    <property type="evidence" value="ECO:0000315"/>
    <property type="project" value="MGI"/>
</dbReference>
<dbReference type="GO" id="GO:0055117">
    <property type="term" value="P:regulation of cardiac muscle contraction"/>
    <property type="evidence" value="ECO:0007669"/>
    <property type="project" value="InterPro"/>
</dbReference>
<dbReference type="GO" id="GO:0019229">
    <property type="term" value="P:regulation of vasoconstriction"/>
    <property type="evidence" value="ECO:0007669"/>
    <property type="project" value="InterPro"/>
</dbReference>
<dbReference type="GO" id="GO:0001975">
    <property type="term" value="P:response to amphetamine"/>
    <property type="evidence" value="ECO:0000315"/>
    <property type="project" value="MGI"/>
</dbReference>
<dbReference type="GO" id="GO:0043278">
    <property type="term" value="P:response to morphine"/>
    <property type="evidence" value="ECO:0000315"/>
    <property type="project" value="MGI"/>
</dbReference>
<dbReference type="GO" id="GO:0001987">
    <property type="term" value="P:vasoconstriction of artery involved in baroreceptor response to lowering of systemic arterial blood pressure"/>
    <property type="evidence" value="ECO:0000315"/>
    <property type="project" value="MGI"/>
</dbReference>
<dbReference type="GO" id="GO:0008542">
    <property type="term" value="P:visual learning"/>
    <property type="evidence" value="ECO:0000315"/>
    <property type="project" value="MGI"/>
</dbReference>
<dbReference type="CDD" id="cd15326">
    <property type="entry name" value="7tmA_alpha1B_AR"/>
    <property type="match status" value="1"/>
</dbReference>
<dbReference type="FunFam" id="1.20.1070.10:FF:000027">
    <property type="entry name" value="alpha-1A adrenergic receptor"/>
    <property type="match status" value="1"/>
</dbReference>
<dbReference type="Gene3D" id="1.20.1070.10">
    <property type="entry name" value="Rhodopsin 7-helix transmembrane proteins"/>
    <property type="match status" value="1"/>
</dbReference>
<dbReference type="InterPro" id="IPR002233">
    <property type="entry name" value="ADR_fam"/>
</dbReference>
<dbReference type="InterPro" id="IPR001115">
    <property type="entry name" value="ADRA1B_rcpt"/>
</dbReference>
<dbReference type="InterPro" id="IPR000276">
    <property type="entry name" value="GPCR_Rhodpsn"/>
</dbReference>
<dbReference type="InterPro" id="IPR017452">
    <property type="entry name" value="GPCR_Rhodpsn_7TM"/>
</dbReference>
<dbReference type="PANTHER" id="PTHR24248">
    <property type="entry name" value="ADRENERGIC RECEPTOR-RELATED G-PROTEIN COUPLED RECEPTOR"/>
    <property type="match status" value="1"/>
</dbReference>
<dbReference type="PANTHER" id="PTHR24248:SF17">
    <property type="entry name" value="ALPHA-1B ADRENERGIC RECEPTOR"/>
    <property type="match status" value="1"/>
</dbReference>
<dbReference type="Pfam" id="PF00001">
    <property type="entry name" value="7tm_1"/>
    <property type="match status" value="1"/>
</dbReference>
<dbReference type="PRINTS" id="PR01103">
    <property type="entry name" value="ADRENERGICR"/>
</dbReference>
<dbReference type="PRINTS" id="PR00556">
    <property type="entry name" value="ADRENRGCA1BR"/>
</dbReference>
<dbReference type="PRINTS" id="PR00237">
    <property type="entry name" value="GPCRRHODOPSN"/>
</dbReference>
<dbReference type="SMART" id="SM01381">
    <property type="entry name" value="7TM_GPCR_Srsx"/>
    <property type="match status" value="1"/>
</dbReference>
<dbReference type="SUPFAM" id="SSF81321">
    <property type="entry name" value="Family A G protein-coupled receptor-like"/>
    <property type="match status" value="1"/>
</dbReference>
<dbReference type="PROSITE" id="PS00237">
    <property type="entry name" value="G_PROTEIN_RECEP_F1_1"/>
    <property type="match status" value="1"/>
</dbReference>
<dbReference type="PROSITE" id="PS50262">
    <property type="entry name" value="G_PROTEIN_RECEP_F1_2"/>
    <property type="match status" value="1"/>
</dbReference>
<name>ADA1B_MOUSE</name>
<proteinExistence type="evidence at protein level"/>
<reference key="1">
    <citation type="submission" date="1997-04" db="EMBL/GenBank/DDBJ databases">
        <authorList>
            <person name="Cotecchia S."/>
            <person name="Lattion-Zellweger A."/>
        </authorList>
    </citation>
    <scope>NUCLEOTIDE SEQUENCE [MRNA]</scope>
    <source>
        <strain>BALB/cJ</strain>
        <tissue>Brain</tissue>
    </source>
</reference>
<reference key="2">
    <citation type="journal article" date="1995" name="J. Neurochem.">
        <title>Molecular cloning of alpha 1d-adrenergic receptor and tissue distribution of three alpha 1-adrenergic receptor subtypes in mouse.</title>
        <authorList>
            <person name="Alonso-Llamazares A."/>
            <person name="Zamanillo D."/>
            <person name="Casanova E."/>
            <person name="Ovalle S."/>
            <person name="Calvo P."/>
            <person name="Chinchetru M.A."/>
        </authorList>
    </citation>
    <scope>NUCLEOTIDE SEQUENCE [MRNA] OF 238-276</scope>
</reference>
<reference key="3">
    <citation type="journal article" date="2010" name="Cell">
        <title>A tissue-specific atlas of mouse protein phosphorylation and expression.</title>
        <authorList>
            <person name="Huttlin E.L."/>
            <person name="Jedrychowski M.P."/>
            <person name="Elias J.E."/>
            <person name="Goswami T."/>
            <person name="Rad R."/>
            <person name="Beausoleil S.A."/>
            <person name="Villen J."/>
            <person name="Haas W."/>
            <person name="Sowa M.E."/>
            <person name="Gygi S.P."/>
        </authorList>
    </citation>
    <scope>PHOSPHORYLATION [LARGE SCALE ANALYSIS] AT THR-263</scope>
    <scope>IDENTIFICATION BY MASS SPECTROMETRY [LARGE SCALE ANALYSIS]</scope>
    <source>
        <tissue>Heart</tissue>
    </source>
</reference>
<reference key="4">
    <citation type="journal article" date="2012" name="Cell. Signal.">
        <title>Nuclear localization drives alpha1-adrenergic receptor oligomerization and signaling in cardiac myocytes.</title>
        <authorList>
            <person name="Wright C.D."/>
            <person name="Wu S.C."/>
            <person name="Dahl E.F."/>
            <person name="Sazama A.J."/>
            <person name="O'Connell T.D."/>
        </authorList>
    </citation>
    <scope>SUBCELLULAR LOCATION</scope>
</reference>
<gene>
    <name type="primary">Adra1b</name>
</gene>
<sequence length="514" mass="56418">MNPDLDTGHNTSAPAHWGELKDANFTGPNQTSSNSTLPQLDVTRAISVGCLGAFILFAIVGNILVILSVACNRHLRTPTNYFIVNLAIADLLLSFTDLPFSATLEVLGYWVLGRIFCDIWAAVDVLCCTASILSLCAISIDRYIGVRYSLQYPTLVTRRKAILALLSVWVLSTVISIGPLLGWKEPAPNDDKECGVTEEPFYALFSSLGSFYIPLAVILVMYCRVYIVAKRTTKNLEAGVMKEMSNSKELTLRIHSKNFHEDTLSSTKAKGHNPRSSIAVKLFKFSREKKAAKTLGIVVGMFILCWLPFFIALPLGSLFSTLKPPDAVFKVVFWLGYFNSCLNPIIYPCSSKEFKRAFMRILGCQCRGGRRRRRRRRLGACAYTYRPWTRGGSLERSQSRKDSLDDSGSCMSGSQRTLPSASPSPGYLGRGTQPPVELCAFPEWKPGALLSLPEPPGRRGRLDSGPLFTFKLLGEPESPGTEGDASNGGCDTTTDLANGQPGFKSNMPLAPGHF</sequence>
<feature type="chain" id="PRO_0000069071" description="Alpha-1B adrenergic receptor">
    <location>
        <begin position="1"/>
        <end position="514"/>
    </location>
</feature>
<feature type="topological domain" description="Extracellular" evidence="1">
    <location>
        <begin position="1"/>
        <end position="45"/>
    </location>
</feature>
<feature type="transmembrane region" description="Helical; Name=1" evidence="1">
    <location>
        <begin position="46"/>
        <end position="69"/>
    </location>
</feature>
<feature type="topological domain" description="Cytoplasmic" evidence="1">
    <location>
        <begin position="70"/>
        <end position="82"/>
    </location>
</feature>
<feature type="transmembrane region" description="Helical; Name=2" evidence="1">
    <location>
        <begin position="83"/>
        <end position="104"/>
    </location>
</feature>
<feature type="topological domain" description="Extracellular" evidence="1">
    <location>
        <begin position="105"/>
        <end position="114"/>
    </location>
</feature>
<feature type="transmembrane region" description="Helical; Name=3" evidence="1">
    <location>
        <begin position="115"/>
        <end position="140"/>
    </location>
</feature>
<feature type="topological domain" description="Cytoplasmic" evidence="1">
    <location>
        <begin position="141"/>
        <end position="160"/>
    </location>
</feature>
<feature type="transmembrane region" description="Helical; Name=4" evidence="1">
    <location>
        <begin position="161"/>
        <end position="183"/>
    </location>
</feature>
<feature type="topological domain" description="Extracellular" evidence="1">
    <location>
        <begin position="184"/>
        <end position="200"/>
    </location>
</feature>
<feature type="transmembrane region" description="Helical; Name=5" evidence="1">
    <location>
        <begin position="201"/>
        <end position="223"/>
    </location>
</feature>
<feature type="topological domain" description="Cytoplasmic" evidence="1">
    <location>
        <begin position="224"/>
        <end position="294"/>
    </location>
</feature>
<feature type="transmembrane region" description="Helical; Name=6" evidence="1">
    <location>
        <begin position="295"/>
        <end position="318"/>
    </location>
</feature>
<feature type="topological domain" description="Extracellular" evidence="1">
    <location>
        <begin position="319"/>
        <end position="325"/>
    </location>
</feature>
<feature type="transmembrane region" description="Helical; Name=7" evidence="1">
    <location>
        <begin position="326"/>
        <end position="350"/>
    </location>
</feature>
<feature type="topological domain" description="Cytoplasmic" evidence="1">
    <location>
        <begin position="351"/>
        <end position="514"/>
    </location>
</feature>
<feature type="region of interest" description="Disordered" evidence="5">
    <location>
        <begin position="391"/>
        <end position="429"/>
    </location>
</feature>
<feature type="region of interest" description="Disordered" evidence="5">
    <location>
        <begin position="473"/>
        <end position="514"/>
    </location>
</feature>
<feature type="short sequence motif" description="Nuclear localization signal" evidence="1">
    <location>
        <begin position="367"/>
        <end position="377"/>
    </location>
</feature>
<feature type="compositionally biased region" description="Polar residues" evidence="5">
    <location>
        <begin position="409"/>
        <end position="423"/>
    </location>
</feature>
<feature type="modified residue" description="Phosphothreonine" evidence="7">
    <location>
        <position position="263"/>
    </location>
</feature>
<feature type="lipid moiety-binding region" description="S-palmitoyl cysteine" evidence="3">
    <location>
        <position position="364"/>
    </location>
</feature>
<feature type="glycosylation site" description="N-linked (GlcNAc...) asparagine" evidence="3">
    <location>
        <position position="10"/>
    </location>
</feature>
<feature type="glycosylation site" description="N-linked (GlcNAc...) asparagine" evidence="3">
    <location>
        <position position="24"/>
    </location>
</feature>
<feature type="glycosylation site" description="N-linked (GlcNAc...) asparagine" evidence="3">
    <location>
        <position position="29"/>
    </location>
</feature>
<feature type="glycosylation site" description="N-linked (GlcNAc...) asparagine" evidence="3">
    <location>
        <position position="34"/>
    </location>
</feature>
<feature type="disulfide bond" evidence="4">
    <location>
        <begin position="117"/>
        <end position="194"/>
    </location>
</feature>
<accession>P97717</accession>
<evidence type="ECO:0000250" key="1"/>
<evidence type="ECO:0000250" key="2">
    <source>
        <dbReference type="UniProtKB" id="P35368"/>
    </source>
</evidence>
<evidence type="ECO:0000255" key="3"/>
<evidence type="ECO:0000255" key="4">
    <source>
        <dbReference type="PROSITE-ProRule" id="PRU00521"/>
    </source>
</evidence>
<evidence type="ECO:0000256" key="5">
    <source>
        <dbReference type="SAM" id="MobiDB-lite"/>
    </source>
</evidence>
<evidence type="ECO:0000269" key="6">
    <source>
    </source>
</evidence>
<evidence type="ECO:0007744" key="7">
    <source>
    </source>
</evidence>